<proteinExistence type="evidence at transcript level"/>
<organism>
    <name type="scientific">Bos taurus</name>
    <name type="common">Bovine</name>
    <dbReference type="NCBI Taxonomy" id="9913"/>
    <lineage>
        <taxon>Eukaryota</taxon>
        <taxon>Metazoa</taxon>
        <taxon>Chordata</taxon>
        <taxon>Craniata</taxon>
        <taxon>Vertebrata</taxon>
        <taxon>Euteleostomi</taxon>
        <taxon>Mammalia</taxon>
        <taxon>Eutheria</taxon>
        <taxon>Laurasiatheria</taxon>
        <taxon>Artiodactyla</taxon>
        <taxon>Ruminantia</taxon>
        <taxon>Pecora</taxon>
        <taxon>Bovidae</taxon>
        <taxon>Bovinae</taxon>
        <taxon>Bos</taxon>
    </lineage>
</organism>
<keyword id="KW-0007">Acetylation</keyword>
<keyword id="KW-0050">Antiport</keyword>
<keyword id="KW-0106">Calcium</keyword>
<keyword id="KW-0472">Membrane</keyword>
<keyword id="KW-0479">Metal-binding</keyword>
<keyword id="KW-0496">Mitochondrion</keyword>
<keyword id="KW-0999">Mitochondrion inner membrane</keyword>
<keyword id="KW-1185">Reference proteome</keyword>
<keyword id="KW-0677">Repeat</keyword>
<keyword id="KW-0812">Transmembrane</keyword>
<keyword id="KW-1133">Transmembrane helix</keyword>
<keyword id="KW-0813">Transport</keyword>
<reference key="1">
    <citation type="submission" date="2007-06" db="EMBL/GenBank/DDBJ databases">
        <authorList>
            <consortium name="NIH - Mammalian Gene Collection (MGC) project"/>
        </authorList>
    </citation>
    <scope>NUCLEOTIDE SEQUENCE [LARGE SCALE MRNA]</scope>
    <source>
        <strain>Hereford</strain>
        <tissue>Thymus</tissue>
    </source>
</reference>
<feature type="chain" id="PRO_0000317593" description="Mitochondrial adenyl nucleotide antiporter SLC25A24">
    <location>
        <begin position="1"/>
        <end position="477"/>
    </location>
</feature>
<feature type="topological domain" description="Mitochondrial intermembrane" evidence="1">
    <location>
        <begin position="1"/>
        <end position="197"/>
    </location>
</feature>
<feature type="transmembrane region" description="Helical; Name=1" evidence="3">
    <location>
        <begin position="198"/>
        <end position="215"/>
    </location>
</feature>
<feature type="topological domain" description="Mitochondrial matrix" evidence="1">
    <location>
        <begin position="216"/>
        <end position="252"/>
    </location>
</feature>
<feature type="transmembrane region" description="Helical; Name=2" evidence="3">
    <location>
        <begin position="253"/>
        <end position="272"/>
    </location>
</feature>
<feature type="topological domain" description="Mitochondrial intermembrane" evidence="1">
    <location>
        <begin position="273"/>
        <end position="295"/>
    </location>
</feature>
<feature type="transmembrane region" description="Helical; Name=3" evidence="3">
    <location>
        <begin position="296"/>
        <end position="309"/>
    </location>
</feature>
<feature type="topological domain" description="Mitochondrial matrix" evidence="1">
    <location>
        <begin position="310"/>
        <end position="345"/>
    </location>
</feature>
<feature type="transmembrane region" description="Helical; Name=4" evidence="3">
    <location>
        <begin position="346"/>
        <end position="365"/>
    </location>
</feature>
<feature type="topological domain" description="Mitochondrial intermembrane" evidence="1">
    <location>
        <begin position="366"/>
        <end position="388"/>
    </location>
</feature>
<feature type="transmembrane region" description="Helical; Name=5" evidence="3">
    <location>
        <begin position="389"/>
        <end position="406"/>
    </location>
</feature>
<feature type="topological domain" description="Mitochondrial matrix" evidence="1">
    <location>
        <begin position="407"/>
        <end position="445"/>
    </location>
</feature>
<feature type="transmembrane region" description="Helical; Name=6" evidence="3">
    <location>
        <begin position="446"/>
        <end position="465"/>
    </location>
</feature>
<feature type="topological domain" description="Mitochondrial intermembrane" evidence="1">
    <location>
        <begin position="466"/>
        <end position="477"/>
    </location>
</feature>
<feature type="domain" description="EF-hand 1" evidence="5">
    <location>
        <begin position="19"/>
        <end position="54"/>
    </location>
</feature>
<feature type="domain" description="EF-hand 2" evidence="5">
    <location>
        <begin position="61"/>
        <end position="85"/>
    </location>
</feature>
<feature type="domain" description="EF-hand 3" evidence="5">
    <location>
        <begin position="86"/>
        <end position="121"/>
    </location>
</feature>
<feature type="domain" description="EF-hand 4" evidence="5">
    <location>
        <begin position="122"/>
        <end position="157"/>
    </location>
</feature>
<feature type="repeat" description="Solcar 1" evidence="4">
    <location>
        <begin position="192"/>
        <end position="278"/>
    </location>
</feature>
<feature type="repeat" description="Solcar 2" evidence="4">
    <location>
        <begin position="286"/>
        <end position="371"/>
    </location>
</feature>
<feature type="repeat" description="Solcar 3" evidence="4">
    <location>
        <begin position="383"/>
        <end position="471"/>
    </location>
</feature>
<feature type="region of interest" description="Regulatory N-terminal domain" evidence="1">
    <location>
        <begin position="1"/>
        <end position="173"/>
    </location>
</feature>
<feature type="region of interest" description="Linker region" evidence="1">
    <location>
        <begin position="159"/>
        <end position="168"/>
    </location>
</feature>
<feature type="region of interest" description="C-terminal transmembrane transporter domain" evidence="1">
    <location>
        <begin position="174"/>
        <end position="477"/>
    </location>
</feature>
<feature type="binding site" evidence="5">
    <location>
        <position position="32"/>
    </location>
    <ligand>
        <name>Ca(2+)</name>
        <dbReference type="ChEBI" id="CHEBI:29108"/>
        <label>1</label>
    </ligand>
</feature>
<feature type="binding site" evidence="5">
    <location>
        <position position="34"/>
    </location>
    <ligand>
        <name>Ca(2+)</name>
        <dbReference type="ChEBI" id="CHEBI:29108"/>
        <label>1</label>
    </ligand>
</feature>
<feature type="binding site" evidence="5">
    <location>
        <position position="36"/>
    </location>
    <ligand>
        <name>Ca(2+)</name>
        <dbReference type="ChEBI" id="CHEBI:29108"/>
        <label>1</label>
    </ligand>
</feature>
<feature type="binding site" evidence="1">
    <location>
        <position position="38"/>
    </location>
    <ligand>
        <name>Ca(2+)</name>
        <dbReference type="ChEBI" id="CHEBI:29108"/>
        <label>1</label>
    </ligand>
</feature>
<feature type="binding site" evidence="5">
    <location>
        <position position="43"/>
    </location>
    <ligand>
        <name>Ca(2+)</name>
        <dbReference type="ChEBI" id="CHEBI:29108"/>
        <label>1</label>
    </ligand>
</feature>
<feature type="binding site" evidence="5">
    <location>
        <position position="68"/>
    </location>
    <ligand>
        <name>Ca(2+)</name>
        <dbReference type="ChEBI" id="CHEBI:29108"/>
        <label>2</label>
    </ligand>
</feature>
<feature type="binding site" evidence="5">
    <location>
        <position position="70"/>
    </location>
    <ligand>
        <name>Ca(2+)</name>
        <dbReference type="ChEBI" id="CHEBI:29108"/>
        <label>2</label>
    </ligand>
</feature>
<feature type="binding site" evidence="5">
    <location>
        <position position="72"/>
    </location>
    <ligand>
        <name>Ca(2+)</name>
        <dbReference type="ChEBI" id="CHEBI:29108"/>
        <label>2</label>
    </ligand>
</feature>
<feature type="binding site" evidence="5">
    <location>
        <position position="74"/>
    </location>
    <ligand>
        <name>Ca(2+)</name>
        <dbReference type="ChEBI" id="CHEBI:29108"/>
        <label>2</label>
    </ligand>
</feature>
<feature type="binding site" evidence="5">
    <location>
        <position position="79"/>
    </location>
    <ligand>
        <name>Ca(2+)</name>
        <dbReference type="ChEBI" id="CHEBI:29108"/>
        <label>2</label>
    </ligand>
</feature>
<feature type="binding site" evidence="5">
    <location>
        <position position="99"/>
    </location>
    <ligand>
        <name>Ca(2+)</name>
        <dbReference type="ChEBI" id="CHEBI:29108"/>
        <label>3</label>
    </ligand>
</feature>
<feature type="binding site" evidence="5">
    <location>
        <position position="101"/>
    </location>
    <ligand>
        <name>Ca(2+)</name>
        <dbReference type="ChEBI" id="CHEBI:29108"/>
        <label>3</label>
    </ligand>
</feature>
<feature type="binding site" evidence="5">
    <location>
        <position position="103"/>
    </location>
    <ligand>
        <name>Ca(2+)</name>
        <dbReference type="ChEBI" id="CHEBI:29108"/>
        <label>3</label>
    </ligand>
</feature>
<feature type="binding site" evidence="5">
    <location>
        <position position="105"/>
    </location>
    <ligand>
        <name>Ca(2+)</name>
        <dbReference type="ChEBI" id="CHEBI:29108"/>
        <label>3</label>
    </ligand>
</feature>
<feature type="binding site" evidence="5">
    <location>
        <position position="110"/>
    </location>
    <ligand>
        <name>Ca(2+)</name>
        <dbReference type="ChEBI" id="CHEBI:29108"/>
        <label>3</label>
    </ligand>
</feature>
<feature type="binding site" evidence="1">
    <location>
        <position position="135"/>
    </location>
    <ligand>
        <name>Ca(2+)</name>
        <dbReference type="ChEBI" id="CHEBI:29108"/>
        <label>4</label>
    </ligand>
</feature>
<feature type="binding site" evidence="1">
    <location>
        <position position="137"/>
    </location>
    <ligand>
        <name>Ca(2+)</name>
        <dbReference type="ChEBI" id="CHEBI:29108"/>
        <label>4</label>
    </ligand>
</feature>
<feature type="binding site" evidence="1">
    <location>
        <position position="139"/>
    </location>
    <ligand>
        <name>Ca(2+)</name>
        <dbReference type="ChEBI" id="CHEBI:29108"/>
        <label>4</label>
    </ligand>
</feature>
<feature type="binding site" evidence="1">
    <location>
        <position position="141"/>
    </location>
    <ligand>
        <name>Ca(2+)</name>
        <dbReference type="ChEBI" id="CHEBI:29108"/>
        <label>4</label>
    </ligand>
</feature>
<feature type="binding site" evidence="1">
    <location>
        <position position="146"/>
    </location>
    <ligand>
        <name>Ca(2+)</name>
        <dbReference type="ChEBI" id="CHEBI:29108"/>
        <label>4</label>
    </ligand>
</feature>
<feature type="modified residue" description="N6-acetyllysine; alternate" evidence="2">
    <location>
        <position position="320"/>
    </location>
</feature>
<feature type="modified residue" description="N6-succinyllysine; alternate" evidence="2">
    <location>
        <position position="320"/>
    </location>
</feature>
<feature type="modified residue" description="N6-acetyllysine" evidence="1">
    <location>
        <position position="336"/>
    </location>
</feature>
<feature type="modified residue" description="N6-acetyllysine; alternate" evidence="1">
    <location>
        <position position="437"/>
    </location>
</feature>
<feature type="modified residue" description="N6-succinyllysine; alternate" evidence="2">
    <location>
        <position position="437"/>
    </location>
</feature>
<name>SCMC1_BOVIN</name>
<dbReference type="EMBL" id="BC142292">
    <property type="protein sequence ID" value="AAI42293.1"/>
    <property type="molecule type" value="mRNA"/>
</dbReference>
<dbReference type="RefSeq" id="NP_001092536.1">
    <property type="nucleotide sequence ID" value="NM_001099066.1"/>
</dbReference>
<dbReference type="SMR" id="A5PJZ1"/>
<dbReference type="FunCoup" id="A5PJZ1">
    <property type="interactions" value="2634"/>
</dbReference>
<dbReference type="STRING" id="9913.ENSBTAP00000004885"/>
<dbReference type="PaxDb" id="9913-ENSBTAP00000004885"/>
<dbReference type="PeptideAtlas" id="A5PJZ1"/>
<dbReference type="Ensembl" id="ENSBTAT00000004885.6">
    <property type="protein sequence ID" value="ENSBTAP00000004885.4"/>
    <property type="gene ID" value="ENSBTAG00000003752.7"/>
</dbReference>
<dbReference type="GeneID" id="534742"/>
<dbReference type="KEGG" id="bta:534742"/>
<dbReference type="CTD" id="29957"/>
<dbReference type="VEuPathDB" id="HostDB:ENSBTAG00000003752"/>
<dbReference type="VGNC" id="VGNC:55682">
    <property type="gene designation" value="SLC25A24"/>
</dbReference>
<dbReference type="eggNOG" id="KOG0036">
    <property type="taxonomic scope" value="Eukaryota"/>
</dbReference>
<dbReference type="GeneTree" id="ENSGT00940000158786"/>
<dbReference type="HOGENOM" id="CLU_015166_2_0_1"/>
<dbReference type="InParanoid" id="A5PJZ1"/>
<dbReference type="OMA" id="SGQWWKQ"/>
<dbReference type="OrthoDB" id="270584at2759"/>
<dbReference type="TreeFam" id="TF313492"/>
<dbReference type="Proteomes" id="UP000009136">
    <property type="component" value="Chromosome 3"/>
</dbReference>
<dbReference type="Bgee" id="ENSBTAG00000003752">
    <property type="expression patterns" value="Expressed in abomasum and 107 other cell types or tissues"/>
</dbReference>
<dbReference type="GO" id="GO:0005743">
    <property type="term" value="C:mitochondrial inner membrane"/>
    <property type="evidence" value="ECO:0007669"/>
    <property type="project" value="UniProtKB-SubCell"/>
</dbReference>
<dbReference type="GO" id="GO:0000295">
    <property type="term" value="F:adenine nucleotide transmembrane transporter activity"/>
    <property type="evidence" value="ECO:0000250"/>
    <property type="project" value="UniProtKB"/>
</dbReference>
<dbReference type="GO" id="GO:0140988">
    <property type="term" value="F:ADP:phosphate antiporter activity"/>
    <property type="evidence" value="ECO:0000250"/>
    <property type="project" value="UniProtKB"/>
</dbReference>
<dbReference type="GO" id="GO:0005347">
    <property type="term" value="F:ATP transmembrane transporter activity"/>
    <property type="evidence" value="ECO:0000318"/>
    <property type="project" value="GO_Central"/>
</dbReference>
<dbReference type="GO" id="GO:0140987">
    <property type="term" value="F:ATP:phosphate antiporter activity"/>
    <property type="evidence" value="ECO:0000250"/>
    <property type="project" value="UniProtKB"/>
</dbReference>
<dbReference type="GO" id="GO:0005509">
    <property type="term" value="F:calcium ion binding"/>
    <property type="evidence" value="ECO:0007669"/>
    <property type="project" value="Ensembl"/>
</dbReference>
<dbReference type="GO" id="GO:0051503">
    <property type="term" value="P:adenine nucleotide transport"/>
    <property type="evidence" value="ECO:0000250"/>
    <property type="project" value="UniProtKB"/>
</dbReference>
<dbReference type="GO" id="GO:0015866">
    <property type="term" value="P:ADP transport"/>
    <property type="evidence" value="ECO:0000318"/>
    <property type="project" value="GO_Central"/>
</dbReference>
<dbReference type="GO" id="GO:0015867">
    <property type="term" value="P:ATP transport"/>
    <property type="evidence" value="ECO:0000318"/>
    <property type="project" value="GO_Central"/>
</dbReference>
<dbReference type="GO" id="GO:0071277">
    <property type="term" value="P:cellular response to calcium ion"/>
    <property type="evidence" value="ECO:0007669"/>
    <property type="project" value="Ensembl"/>
</dbReference>
<dbReference type="GO" id="GO:0034599">
    <property type="term" value="P:cellular response to oxidative stress"/>
    <property type="evidence" value="ECO:0007669"/>
    <property type="project" value="Ensembl"/>
</dbReference>
<dbReference type="GO" id="GO:1990544">
    <property type="term" value="P:mitochondrial ATP transmembrane transport"/>
    <property type="evidence" value="ECO:0007669"/>
    <property type="project" value="Ensembl"/>
</dbReference>
<dbReference type="FunFam" id="1.10.238.10:FF:000028">
    <property type="entry name" value="Putative calcium-binding mitochondrial carrier protein scamc-2"/>
    <property type="match status" value="1"/>
</dbReference>
<dbReference type="FunFam" id="1.50.40.10:FF:000003">
    <property type="entry name" value="Putative calcium-binding mitochondrial carrier protein scamc-2"/>
    <property type="match status" value="1"/>
</dbReference>
<dbReference type="FunFam" id="1.10.238.10:FF:000168">
    <property type="entry name" value="Solute carrier family 25 member 24"/>
    <property type="match status" value="1"/>
</dbReference>
<dbReference type="Gene3D" id="1.10.238.10">
    <property type="entry name" value="EF-hand"/>
    <property type="match status" value="2"/>
</dbReference>
<dbReference type="Gene3D" id="1.50.40.10">
    <property type="entry name" value="Mitochondrial carrier domain"/>
    <property type="match status" value="1"/>
</dbReference>
<dbReference type="InterPro" id="IPR011992">
    <property type="entry name" value="EF-hand-dom_pair"/>
</dbReference>
<dbReference type="InterPro" id="IPR018247">
    <property type="entry name" value="EF_Hand_1_Ca_BS"/>
</dbReference>
<dbReference type="InterPro" id="IPR002048">
    <property type="entry name" value="EF_hand_dom"/>
</dbReference>
<dbReference type="InterPro" id="IPR002167">
    <property type="entry name" value="GDC-like"/>
</dbReference>
<dbReference type="InterPro" id="IPR002067">
    <property type="entry name" value="Mit_carrier"/>
</dbReference>
<dbReference type="InterPro" id="IPR018108">
    <property type="entry name" value="Mitochondrial_sb/sol_carrier"/>
</dbReference>
<dbReference type="InterPro" id="IPR023395">
    <property type="entry name" value="Mt_carrier_dom_sf"/>
</dbReference>
<dbReference type="PANTHER" id="PTHR24089">
    <property type="entry name" value="SOLUTE CARRIER FAMILY 25"/>
    <property type="match status" value="1"/>
</dbReference>
<dbReference type="Pfam" id="PF13499">
    <property type="entry name" value="EF-hand_7"/>
    <property type="match status" value="2"/>
</dbReference>
<dbReference type="Pfam" id="PF00153">
    <property type="entry name" value="Mito_carr"/>
    <property type="match status" value="3"/>
</dbReference>
<dbReference type="PRINTS" id="PR00928">
    <property type="entry name" value="GRAVESDC"/>
</dbReference>
<dbReference type="PRINTS" id="PR00926">
    <property type="entry name" value="MITOCARRIER"/>
</dbReference>
<dbReference type="SMART" id="SM00054">
    <property type="entry name" value="EFh"/>
    <property type="match status" value="3"/>
</dbReference>
<dbReference type="SUPFAM" id="SSF47473">
    <property type="entry name" value="EF-hand"/>
    <property type="match status" value="1"/>
</dbReference>
<dbReference type="SUPFAM" id="SSF103506">
    <property type="entry name" value="Mitochondrial carrier"/>
    <property type="match status" value="1"/>
</dbReference>
<dbReference type="PROSITE" id="PS00018">
    <property type="entry name" value="EF_HAND_1"/>
    <property type="match status" value="3"/>
</dbReference>
<dbReference type="PROSITE" id="PS50222">
    <property type="entry name" value="EF_HAND_2"/>
    <property type="match status" value="4"/>
</dbReference>
<dbReference type="PROSITE" id="PS50920">
    <property type="entry name" value="SOLCAR"/>
    <property type="match status" value="3"/>
</dbReference>
<protein>
    <recommendedName>
        <fullName evidence="1">Mitochondrial adenyl nucleotide antiporter SLC25A24</fullName>
    </recommendedName>
    <alternativeName>
        <fullName evidence="1">Small calcium-binding mitochondrial carrier protein 1</fullName>
        <shortName evidence="1">SCaMC-1</shortName>
    </alternativeName>
    <alternativeName>
        <fullName>Solute carrier family 25 member 24</fullName>
    </alternativeName>
</protein>
<comment type="function">
    <text evidence="1">Electroneutral antiporter that mediates the transport of adenyl nucleotides through the inner mitochondrial membrane. Originally identified as an ATP-magnesium/inorganic phosphate antiporter, it also acts as a broad specificity adenyl nucleotide antiporter. By regulating the mitochondrial matrix adenyl nucleotide pool could adapt to changing cellular energetic demands and indirectly regulate adenyl nucleotide-dependent metabolic pathways. In vitro, a low activity is also observed with guanyl and pyrimidine nucleotides. May play a role in protecting cells against oxidative stress-induced cell death, by buffering calcium levels in the mitochondrial matrix through the formation of calcium-phosphate precipitates.</text>
</comment>
<comment type="catalytic activity">
    <reaction evidence="1">
        <text>Mg(2+)(out) + phosphate(in) + ATP(out) = Mg(2+)(in) + phosphate(out) + ATP(in)</text>
        <dbReference type="Rhea" id="RHEA:65840"/>
        <dbReference type="ChEBI" id="CHEBI:18420"/>
        <dbReference type="ChEBI" id="CHEBI:30616"/>
        <dbReference type="ChEBI" id="CHEBI:43474"/>
    </reaction>
</comment>
<comment type="catalytic activity">
    <reaction evidence="1">
        <text>ADP(out) + phosphate(in) + H(+)(out) = ADP(in) + phosphate(out) + H(+)(in)</text>
        <dbReference type="Rhea" id="RHEA:65844"/>
        <dbReference type="ChEBI" id="CHEBI:15378"/>
        <dbReference type="ChEBI" id="CHEBI:43474"/>
        <dbReference type="ChEBI" id="CHEBI:456216"/>
    </reaction>
</comment>
<comment type="catalytic activity">
    <reaction evidence="1">
        <text>AMP(out) + phosphate(in) = AMP(in) + phosphate(out)</text>
        <dbReference type="Rhea" id="RHEA:70259"/>
        <dbReference type="ChEBI" id="CHEBI:43474"/>
        <dbReference type="ChEBI" id="CHEBI:456215"/>
    </reaction>
</comment>
<comment type="catalytic activity">
    <reaction evidence="1">
        <text>phosphate(in) + ATP(out) + 2 H(+)(out) = phosphate(out) + ATP(in) + 2 H(+)(in)</text>
        <dbReference type="Rhea" id="RHEA:72035"/>
        <dbReference type="ChEBI" id="CHEBI:15378"/>
        <dbReference type="ChEBI" id="CHEBI:30616"/>
        <dbReference type="ChEBI" id="CHEBI:43474"/>
    </reaction>
</comment>
<comment type="catalytic activity">
    <reaction evidence="1">
        <text>dADP(in) + ADP(out) = dADP(out) + ADP(in)</text>
        <dbReference type="Rhea" id="RHEA:72855"/>
        <dbReference type="ChEBI" id="CHEBI:57667"/>
        <dbReference type="ChEBI" id="CHEBI:456216"/>
    </reaction>
</comment>
<comment type="catalytic activity">
    <reaction evidence="1">
        <text>Mg(2+)(in) + ADP(out) + ATP(in) + H(+)(out) = Mg(2+)(out) + ADP(in) + ATP(out) + H(+)(in)</text>
        <dbReference type="Rhea" id="RHEA:73659"/>
        <dbReference type="ChEBI" id="CHEBI:15378"/>
        <dbReference type="ChEBI" id="CHEBI:18420"/>
        <dbReference type="ChEBI" id="CHEBI:30616"/>
        <dbReference type="ChEBI" id="CHEBI:456216"/>
    </reaction>
</comment>
<comment type="catalytic activity">
    <reaction evidence="1">
        <text>ADP(out) + diphosphate(in) = ADP(in) + diphosphate(out)</text>
        <dbReference type="Rhea" id="RHEA:73671"/>
        <dbReference type="ChEBI" id="CHEBI:33019"/>
        <dbReference type="ChEBI" id="CHEBI:456216"/>
    </reaction>
</comment>
<comment type="catalytic activity">
    <reaction evidence="1">
        <text>dAMP(in) + ADP(out) + H(+)(out) = dAMP(out) + ADP(in) + H(+)(in)</text>
        <dbReference type="Rhea" id="RHEA:73675"/>
        <dbReference type="ChEBI" id="CHEBI:15378"/>
        <dbReference type="ChEBI" id="CHEBI:58245"/>
        <dbReference type="ChEBI" id="CHEBI:456216"/>
    </reaction>
</comment>
<comment type="catalytic activity">
    <reaction evidence="1">
        <text>3'-AMP(in) + ADP(out) + H(+)(out) = 3'-AMP(out) + ADP(in) + H(+)(in)</text>
        <dbReference type="Rhea" id="RHEA:73679"/>
        <dbReference type="ChEBI" id="CHEBI:15378"/>
        <dbReference type="ChEBI" id="CHEBI:60880"/>
        <dbReference type="ChEBI" id="CHEBI:456216"/>
    </reaction>
</comment>
<comment type="catalytic activity">
    <reaction evidence="1">
        <text>dAMP(out) + phosphate(in) = dAMP(in) + phosphate(out)</text>
        <dbReference type="Rhea" id="RHEA:73687"/>
        <dbReference type="ChEBI" id="CHEBI:43474"/>
        <dbReference type="ChEBI" id="CHEBI:58245"/>
    </reaction>
</comment>
<comment type="catalytic activity">
    <reaction evidence="1">
        <text>3'-AMP(out) + phosphate(in) = 3'-AMP(in) + phosphate(out)</text>
        <dbReference type="Rhea" id="RHEA:73691"/>
        <dbReference type="ChEBI" id="CHEBI:43474"/>
        <dbReference type="ChEBI" id="CHEBI:60880"/>
    </reaction>
</comment>
<comment type="catalytic activity">
    <reaction evidence="1">
        <text>dADP(out) + phosphate(in) + H(+)(out) = dADP(in) + phosphate(out) + H(+)(in)</text>
        <dbReference type="Rhea" id="RHEA:73695"/>
        <dbReference type="ChEBI" id="CHEBI:15378"/>
        <dbReference type="ChEBI" id="CHEBI:43474"/>
        <dbReference type="ChEBI" id="CHEBI:57667"/>
    </reaction>
</comment>
<comment type="activity regulation">
    <text evidence="1">Activated by an increase in cytosolic calcium levels that induce a conformational change of the N-terminal regulatory domain, uncapping the channel and allowing transport. Inhibited by bathophenanthroline, mersalyl, p-hydroxymercuribenzoate, bromcresol purple and tannic acid.</text>
</comment>
<comment type="subunit">
    <text evidence="1">Monomer.</text>
</comment>
<comment type="subcellular location">
    <subcellularLocation>
        <location evidence="1">Mitochondrion inner membrane</location>
        <topology evidence="3">Multi-pass membrane protein</topology>
    </subcellularLocation>
</comment>
<comment type="domain">
    <text evidence="1">The regulatory N-terminal domain/NTD formed of two pairs of fused calcium-binding EF-hands, binds calcium in the mitochondrial intermembrane space and regulates the antiporter activity of the transmembrane domain/TMD. In absence of calcium, the apo form of the N-terminal domain is intrinsically disordered and binds to the transmembrane domain, inhibiting the transporter activity. Binding of calcium leads to a major conformational change and abolishes the interaction with the transmembrane domain and the inhibition of the transporter activity.</text>
</comment>
<comment type="domain">
    <text evidence="1">The C-terminal mitochondrial carrier domain/transmembrane domain/TMD bears the transmembrane transporter activity.</text>
</comment>
<comment type="domain">
    <text evidence="1">Linker region/H9 could directly block the transport of substrates across the transporter.</text>
</comment>
<comment type="similarity">
    <text evidence="6">Belongs to the mitochondrial carrier (TC 2.A.29) family.</text>
</comment>
<sequence length="477" mass="53285">MLRWLRGFVLPTAACQDVEPPTRYETLFQKLDRNGDGVVDISELQEGLKSLGIPLGQDAEEKIFTTGDVNKDGKLDFEEFMKYLKDHEKKMKLAFKSLDKNNDGKIEASEIVQSLQILGLTISEQQAELILQSIDADGTMTVDWNEWRDYFLFNPVTDIEEIIRFWKHSTGIDIGDSLTIPDEFTEDEKKSGQWWRQLLAGGVAGAVSRTSTAPLDRLKVMMQVHGSKSAKMNIYGGFQQMVKEGGIRSLWRGNGTNVIKIAPETAVKFWAYEQYKKLLTEEGQKIGTFERFVSGSMAGATAQTFIYPMEVLKTRLAVGKTGQYSGMFDCAKKILKYEGMGAFYKGYVPNLLGIIPYAGIDLAVYELLKSHWLDNFAKDSVNPGVMVLLGCGALSSTCGQLASYPLALVRTRMQAQAMIEKSPQLNMVGLFRRILSKEGLPGLYRGITPNFMKVLPAVGISYVVYENMKQTLGVTQK</sequence>
<gene>
    <name type="primary">SLC25A24</name>
</gene>
<accession>A5PJZ1</accession>
<evidence type="ECO:0000250" key="1">
    <source>
        <dbReference type="UniProtKB" id="Q6NUK1"/>
    </source>
</evidence>
<evidence type="ECO:0000250" key="2">
    <source>
        <dbReference type="UniProtKB" id="Q8BMD8"/>
    </source>
</evidence>
<evidence type="ECO:0000255" key="3"/>
<evidence type="ECO:0000255" key="4">
    <source>
        <dbReference type="PROSITE-ProRule" id="PRU00282"/>
    </source>
</evidence>
<evidence type="ECO:0000255" key="5">
    <source>
        <dbReference type="PROSITE-ProRule" id="PRU00448"/>
    </source>
</evidence>
<evidence type="ECO:0000305" key="6"/>